<organism>
    <name type="scientific">Brucella abortus biovar 1 (strain 9-941)</name>
    <dbReference type="NCBI Taxonomy" id="262698"/>
    <lineage>
        <taxon>Bacteria</taxon>
        <taxon>Pseudomonadati</taxon>
        <taxon>Pseudomonadota</taxon>
        <taxon>Alphaproteobacteria</taxon>
        <taxon>Hyphomicrobiales</taxon>
        <taxon>Brucellaceae</taxon>
        <taxon>Brucella/Ochrobactrum group</taxon>
        <taxon>Brucella</taxon>
    </lineage>
</organism>
<dbReference type="EMBL" id="AE017224">
    <property type="protein sequence ID" value="AAX76039.1"/>
    <property type="molecule type" value="Genomic_DNA"/>
</dbReference>
<dbReference type="RefSeq" id="WP_002971239.1">
    <property type="nucleotide sequence ID" value="NC_006933.1"/>
</dbReference>
<dbReference type="SMR" id="Q577Z5"/>
<dbReference type="EnsemblBacteria" id="AAX76039">
    <property type="protein sequence ID" value="AAX76039"/>
    <property type="gene ID" value="BruAb2_0628"/>
</dbReference>
<dbReference type="KEGG" id="bmb:BruAb2_0628"/>
<dbReference type="HOGENOM" id="CLU_070010_4_0_5"/>
<dbReference type="Proteomes" id="UP000000540">
    <property type="component" value="Chromosome II"/>
</dbReference>
<dbReference type="GO" id="GO:0016787">
    <property type="term" value="F:hydrolase activity"/>
    <property type="evidence" value="ECO:0007669"/>
    <property type="project" value="UniProtKB-UniRule"/>
</dbReference>
<dbReference type="CDD" id="cd06262">
    <property type="entry name" value="metallo-hydrolase-like_MBL-fold"/>
    <property type="match status" value="1"/>
</dbReference>
<dbReference type="Gene3D" id="3.60.15.10">
    <property type="entry name" value="Ribonuclease Z/Hydroxyacylglutathione hydrolase-like"/>
    <property type="match status" value="1"/>
</dbReference>
<dbReference type="HAMAP" id="MF_00457">
    <property type="entry name" value="UPF0173"/>
    <property type="match status" value="1"/>
</dbReference>
<dbReference type="InterPro" id="IPR001279">
    <property type="entry name" value="Metallo-B-lactamas"/>
</dbReference>
<dbReference type="InterPro" id="IPR036866">
    <property type="entry name" value="RibonucZ/Hydroxyglut_hydro"/>
</dbReference>
<dbReference type="InterPro" id="IPR022877">
    <property type="entry name" value="UPF0173"/>
</dbReference>
<dbReference type="InterPro" id="IPR050114">
    <property type="entry name" value="UPF0173_UPF0282_UlaG_hydrolase"/>
</dbReference>
<dbReference type="NCBIfam" id="NF001911">
    <property type="entry name" value="PRK00685.1"/>
    <property type="match status" value="1"/>
</dbReference>
<dbReference type="PANTHER" id="PTHR43546:SF3">
    <property type="entry name" value="UPF0173 METAL-DEPENDENT HYDROLASE MJ1163"/>
    <property type="match status" value="1"/>
</dbReference>
<dbReference type="PANTHER" id="PTHR43546">
    <property type="entry name" value="UPF0173 METAL-DEPENDENT HYDROLASE MJ1163-RELATED"/>
    <property type="match status" value="1"/>
</dbReference>
<dbReference type="Pfam" id="PF13483">
    <property type="entry name" value="Lactamase_B_3"/>
    <property type="match status" value="1"/>
</dbReference>
<dbReference type="SMART" id="SM00849">
    <property type="entry name" value="Lactamase_B"/>
    <property type="match status" value="1"/>
</dbReference>
<dbReference type="SUPFAM" id="SSF56281">
    <property type="entry name" value="Metallo-hydrolase/oxidoreductase"/>
    <property type="match status" value="1"/>
</dbReference>
<feature type="chain" id="PRO_0000367163" description="UPF0173 metal-dependent hydrolase BruAb2_0628">
    <location>
        <begin position="1"/>
        <end position="237"/>
    </location>
</feature>
<name>Y2928_BRUAB</name>
<keyword id="KW-0378">Hydrolase</keyword>
<reference key="1">
    <citation type="journal article" date="2005" name="J. Bacteriol.">
        <title>Completion of the genome sequence of Brucella abortus and comparison to the highly similar genomes of Brucella melitensis and Brucella suis.</title>
        <authorList>
            <person name="Halling S.M."/>
            <person name="Peterson-Burch B.D."/>
            <person name="Bricker B.J."/>
            <person name="Zuerner R.L."/>
            <person name="Qing Z."/>
            <person name="Li L.-L."/>
            <person name="Kapur V."/>
            <person name="Alt D.P."/>
            <person name="Olsen S.C."/>
        </authorList>
    </citation>
    <scope>NUCLEOTIDE SEQUENCE [LARGE SCALE GENOMIC DNA]</scope>
    <source>
        <strain>9-941</strain>
    </source>
</reference>
<sequence>MKITWLGHAAFRVETAKAVILIDPFLNGNPGAKGIDFKEATRGVTHIALTHGHGDHVGDTVAIAREHGATVIANADLASWLGSQGVEKLDPGNTGGTLAHEGFTITFVNALHSSAMLTENGVSQALGNPNGLVFHFEDSPTLYHMGDTDIFSDMALINELHQPEIGIVPIGDRFTMGGAVAALACQRYFNFNSVLPCHYASFPIIDRTADKFIAGMADHPATKVLADPAGTVHSFQA</sequence>
<evidence type="ECO:0000255" key="1">
    <source>
        <dbReference type="HAMAP-Rule" id="MF_00457"/>
    </source>
</evidence>
<gene>
    <name type="ordered locus">BruAb2_0628</name>
</gene>
<comment type="similarity">
    <text evidence="1">Belongs to the UPF0173 family.</text>
</comment>
<proteinExistence type="inferred from homology"/>
<accession>Q577Z5</accession>
<protein>
    <recommendedName>
        <fullName evidence="1">UPF0173 metal-dependent hydrolase BruAb2_0628</fullName>
    </recommendedName>
</protein>